<reference key="1">
    <citation type="journal article" date="2011" name="BMC Genomics">
        <title>Complete genome sequence of the filamentous anoxygenic phototrophic bacterium Chloroflexus aurantiacus.</title>
        <authorList>
            <person name="Tang K.H."/>
            <person name="Barry K."/>
            <person name="Chertkov O."/>
            <person name="Dalin E."/>
            <person name="Han C.S."/>
            <person name="Hauser L.J."/>
            <person name="Honchak B.M."/>
            <person name="Karbach L.E."/>
            <person name="Land M.L."/>
            <person name="Lapidus A."/>
            <person name="Larimer F.W."/>
            <person name="Mikhailova N."/>
            <person name="Pitluck S."/>
            <person name="Pierson B.K."/>
            <person name="Blankenship R.E."/>
        </authorList>
    </citation>
    <scope>NUCLEOTIDE SEQUENCE [LARGE SCALE GENOMIC DNA]</scope>
    <source>
        <strain>ATCC 29366 / DSM 635 / J-10-fl</strain>
    </source>
</reference>
<accession>A9WAR0</accession>
<dbReference type="EC" id="2.1.2.9" evidence="1"/>
<dbReference type="EMBL" id="CP000909">
    <property type="protein sequence ID" value="ABY33288.1"/>
    <property type="molecule type" value="Genomic_DNA"/>
</dbReference>
<dbReference type="RefSeq" id="WP_012255944.1">
    <property type="nucleotide sequence ID" value="NC_010175.1"/>
</dbReference>
<dbReference type="RefSeq" id="YP_001633677.1">
    <property type="nucleotide sequence ID" value="NC_010175.1"/>
</dbReference>
<dbReference type="SMR" id="A9WAR0"/>
<dbReference type="FunCoup" id="A9WAR0">
    <property type="interactions" value="452"/>
</dbReference>
<dbReference type="STRING" id="324602.Caur_0033"/>
<dbReference type="EnsemblBacteria" id="ABY33288">
    <property type="protein sequence ID" value="ABY33288"/>
    <property type="gene ID" value="Caur_0033"/>
</dbReference>
<dbReference type="KEGG" id="cau:Caur_0033"/>
<dbReference type="PATRIC" id="fig|324602.8.peg.36"/>
<dbReference type="eggNOG" id="COG0223">
    <property type="taxonomic scope" value="Bacteria"/>
</dbReference>
<dbReference type="HOGENOM" id="CLU_033347_1_1_0"/>
<dbReference type="InParanoid" id="A9WAR0"/>
<dbReference type="Proteomes" id="UP000002008">
    <property type="component" value="Chromosome"/>
</dbReference>
<dbReference type="GO" id="GO:0005829">
    <property type="term" value="C:cytosol"/>
    <property type="evidence" value="ECO:0000318"/>
    <property type="project" value="GO_Central"/>
</dbReference>
<dbReference type="GO" id="GO:0004479">
    <property type="term" value="F:methionyl-tRNA formyltransferase activity"/>
    <property type="evidence" value="ECO:0000318"/>
    <property type="project" value="GO_Central"/>
</dbReference>
<dbReference type="GO" id="GO:0071951">
    <property type="term" value="P:conversion of methionyl-tRNA to N-formyl-methionyl-tRNA"/>
    <property type="evidence" value="ECO:0000318"/>
    <property type="project" value="GO_Central"/>
</dbReference>
<dbReference type="CDD" id="cd08646">
    <property type="entry name" value="FMT_core_Met-tRNA-FMT_N"/>
    <property type="match status" value="1"/>
</dbReference>
<dbReference type="CDD" id="cd08704">
    <property type="entry name" value="Met_tRNA_FMT_C"/>
    <property type="match status" value="1"/>
</dbReference>
<dbReference type="Gene3D" id="3.10.25.10">
    <property type="entry name" value="Formyl transferase, C-terminal domain"/>
    <property type="match status" value="1"/>
</dbReference>
<dbReference type="Gene3D" id="3.40.50.170">
    <property type="entry name" value="Formyl transferase, N-terminal domain"/>
    <property type="match status" value="1"/>
</dbReference>
<dbReference type="HAMAP" id="MF_00182">
    <property type="entry name" value="Formyl_trans"/>
    <property type="match status" value="1"/>
</dbReference>
<dbReference type="InterPro" id="IPR005794">
    <property type="entry name" value="Fmt"/>
</dbReference>
<dbReference type="InterPro" id="IPR005793">
    <property type="entry name" value="Formyl_trans_C"/>
</dbReference>
<dbReference type="InterPro" id="IPR037022">
    <property type="entry name" value="Formyl_trans_C_sf"/>
</dbReference>
<dbReference type="InterPro" id="IPR002376">
    <property type="entry name" value="Formyl_transf_N"/>
</dbReference>
<dbReference type="InterPro" id="IPR036477">
    <property type="entry name" value="Formyl_transf_N_sf"/>
</dbReference>
<dbReference type="InterPro" id="IPR011034">
    <property type="entry name" value="Formyl_transferase-like_C_sf"/>
</dbReference>
<dbReference type="InterPro" id="IPR044135">
    <property type="entry name" value="Met-tRNA-FMT_C"/>
</dbReference>
<dbReference type="InterPro" id="IPR041711">
    <property type="entry name" value="Met-tRNA-FMT_N"/>
</dbReference>
<dbReference type="NCBIfam" id="TIGR00460">
    <property type="entry name" value="fmt"/>
    <property type="match status" value="1"/>
</dbReference>
<dbReference type="PANTHER" id="PTHR11138">
    <property type="entry name" value="METHIONYL-TRNA FORMYLTRANSFERASE"/>
    <property type="match status" value="1"/>
</dbReference>
<dbReference type="PANTHER" id="PTHR11138:SF5">
    <property type="entry name" value="METHIONYL-TRNA FORMYLTRANSFERASE, MITOCHONDRIAL"/>
    <property type="match status" value="1"/>
</dbReference>
<dbReference type="Pfam" id="PF02911">
    <property type="entry name" value="Formyl_trans_C"/>
    <property type="match status" value="1"/>
</dbReference>
<dbReference type="Pfam" id="PF00551">
    <property type="entry name" value="Formyl_trans_N"/>
    <property type="match status" value="1"/>
</dbReference>
<dbReference type="SUPFAM" id="SSF50486">
    <property type="entry name" value="FMT C-terminal domain-like"/>
    <property type="match status" value="1"/>
</dbReference>
<dbReference type="SUPFAM" id="SSF53328">
    <property type="entry name" value="Formyltransferase"/>
    <property type="match status" value="1"/>
</dbReference>
<feature type="chain" id="PRO_1000118473" description="Methionyl-tRNA formyltransferase">
    <location>
        <begin position="1"/>
        <end position="310"/>
    </location>
</feature>
<feature type="binding site" evidence="1">
    <location>
        <begin position="109"/>
        <end position="112"/>
    </location>
    <ligand>
        <name>(6S)-5,6,7,8-tetrahydrofolate</name>
        <dbReference type="ChEBI" id="CHEBI:57453"/>
    </ligand>
</feature>
<keyword id="KW-0648">Protein biosynthesis</keyword>
<keyword id="KW-1185">Reference proteome</keyword>
<keyword id="KW-0808">Transferase</keyword>
<gene>
    <name evidence="1" type="primary">fmt</name>
    <name type="ordered locus">Caur_0033</name>
</gene>
<proteinExistence type="inferred from homology"/>
<sequence length="310" mass="33137">MRILFLGSPSFAVHALEALVAAGHEIVGVVTQPDRPAGRDRRLTPPPVKIAAMAHNLPVLQPETLRDPTVVETLSALQPEVGVVAAYGEILRRAVLSIPPLGYLNIHPSLLPLYRGPTPVAGAILAGETVTGVTIMLLDPSMDSGPILAQAVVDLPPTARAGQLTDELFRIGADLLVQVLPRYARGEIEPRPQDHSRATVTKMLKKEDGRIDWSLPAIVIERMTRAYDPWPGAYTFWRGQPLRIIKAAVASADGTNVPGTVIGRSGSGHPLVQTGSDALELIEVQPASRRPMSGSAWLAGVHADNIRLGE</sequence>
<evidence type="ECO:0000255" key="1">
    <source>
        <dbReference type="HAMAP-Rule" id="MF_00182"/>
    </source>
</evidence>
<comment type="function">
    <text evidence="1">Attaches a formyl group to the free amino group of methionyl-tRNA(fMet). The formyl group appears to play a dual role in the initiator identity of N-formylmethionyl-tRNA by promoting its recognition by IF2 and preventing the misappropriation of this tRNA by the elongation apparatus.</text>
</comment>
<comment type="catalytic activity">
    <reaction evidence="1">
        <text>L-methionyl-tRNA(fMet) + (6R)-10-formyltetrahydrofolate = N-formyl-L-methionyl-tRNA(fMet) + (6S)-5,6,7,8-tetrahydrofolate + H(+)</text>
        <dbReference type="Rhea" id="RHEA:24380"/>
        <dbReference type="Rhea" id="RHEA-COMP:9952"/>
        <dbReference type="Rhea" id="RHEA-COMP:9953"/>
        <dbReference type="ChEBI" id="CHEBI:15378"/>
        <dbReference type="ChEBI" id="CHEBI:57453"/>
        <dbReference type="ChEBI" id="CHEBI:78530"/>
        <dbReference type="ChEBI" id="CHEBI:78844"/>
        <dbReference type="ChEBI" id="CHEBI:195366"/>
        <dbReference type="EC" id="2.1.2.9"/>
    </reaction>
</comment>
<comment type="similarity">
    <text evidence="1">Belongs to the Fmt family.</text>
</comment>
<protein>
    <recommendedName>
        <fullName evidence="1">Methionyl-tRNA formyltransferase</fullName>
        <ecNumber evidence="1">2.1.2.9</ecNumber>
    </recommendedName>
</protein>
<name>FMT_CHLAA</name>
<organism>
    <name type="scientific">Chloroflexus aurantiacus (strain ATCC 29366 / DSM 635 / J-10-fl)</name>
    <dbReference type="NCBI Taxonomy" id="324602"/>
    <lineage>
        <taxon>Bacteria</taxon>
        <taxon>Bacillati</taxon>
        <taxon>Chloroflexota</taxon>
        <taxon>Chloroflexia</taxon>
        <taxon>Chloroflexales</taxon>
        <taxon>Chloroflexineae</taxon>
        <taxon>Chloroflexaceae</taxon>
        <taxon>Chloroflexus</taxon>
    </lineage>
</organism>